<gene>
    <name evidence="1" type="primary">groES</name>
    <name evidence="1" type="synonym">groS</name>
</gene>
<comment type="function">
    <text evidence="1">Together with the chaperonin GroEL, plays an essential role in assisting protein folding. The GroEL-GroES system forms a nano-cage that allows encapsulation of the non-native substrate proteins and provides a physical environment optimized to promote and accelerate protein folding. GroES binds to the apical surface of the GroEL ring, thereby capping the opening of the GroEL channel.</text>
</comment>
<comment type="subunit">
    <text evidence="1">Heptamer of 7 subunits arranged in a ring. Interacts with the chaperonin GroEL.</text>
</comment>
<comment type="subcellular location">
    <subcellularLocation>
        <location evidence="1">Cytoplasm</location>
    </subcellularLocation>
</comment>
<comment type="similarity">
    <text evidence="1">Belongs to the GroES chaperonin family.</text>
</comment>
<organism>
    <name type="scientific">Streptococcus anginosus</name>
    <dbReference type="NCBI Taxonomy" id="1328"/>
    <lineage>
        <taxon>Bacteria</taxon>
        <taxon>Bacillati</taxon>
        <taxon>Bacillota</taxon>
        <taxon>Bacilli</taxon>
        <taxon>Lactobacillales</taxon>
        <taxon>Streptococcaceae</taxon>
        <taxon>Streptococcus</taxon>
        <taxon>Streptococcus anginosus group</taxon>
    </lineage>
</organism>
<accession>Q8KJ21</accession>
<feature type="chain" id="PRO_0000174855" description="Co-chaperonin GroES">
    <location>
        <begin position="1"/>
        <end position="93"/>
    </location>
</feature>
<keyword id="KW-0143">Chaperone</keyword>
<keyword id="KW-0963">Cytoplasm</keyword>
<reference key="1">
    <citation type="journal article" date="2002" name="J. Clin. Microbiol.">
        <title>groESL sequence determination, phylogenetic analysis, and species differentiation for viridans group streptococci.</title>
        <authorList>
            <person name="Teng L.-J."/>
            <person name="Hsueh P.R."/>
            <person name="Tsai J.C."/>
            <person name="Chen P.-W."/>
            <person name="Hsu J.-C."/>
            <person name="Lai H.C."/>
            <person name="Lee C.N."/>
            <person name="Ho S.W."/>
        </authorList>
    </citation>
    <scope>NUCLEOTIDE SEQUENCE [GENOMIC DNA]</scope>
</reference>
<protein>
    <recommendedName>
        <fullName evidence="1">Co-chaperonin GroES</fullName>
    </recommendedName>
    <alternativeName>
        <fullName evidence="1">10 kDa chaperonin</fullName>
    </alternativeName>
    <alternativeName>
        <fullName evidence="1">Chaperonin-10</fullName>
        <shortName evidence="1">Cpn10</shortName>
    </alternativeName>
</protein>
<dbReference type="EMBL" id="AF378195">
    <property type="protein sequence ID" value="AAM46143.1"/>
    <property type="molecule type" value="Genomic_DNA"/>
</dbReference>
<dbReference type="RefSeq" id="WP_003030877.1">
    <property type="nucleotide sequence ID" value="NZ_PVSZ01000004.1"/>
</dbReference>
<dbReference type="SMR" id="Q8KJ21"/>
<dbReference type="STRING" id="862971.SANR_0268"/>
<dbReference type="GeneID" id="93964364"/>
<dbReference type="eggNOG" id="COG0234">
    <property type="taxonomic scope" value="Bacteria"/>
</dbReference>
<dbReference type="GO" id="GO:0005737">
    <property type="term" value="C:cytoplasm"/>
    <property type="evidence" value="ECO:0007669"/>
    <property type="project" value="UniProtKB-SubCell"/>
</dbReference>
<dbReference type="GO" id="GO:0005524">
    <property type="term" value="F:ATP binding"/>
    <property type="evidence" value="ECO:0007669"/>
    <property type="project" value="InterPro"/>
</dbReference>
<dbReference type="GO" id="GO:0046872">
    <property type="term" value="F:metal ion binding"/>
    <property type="evidence" value="ECO:0007669"/>
    <property type="project" value="TreeGrafter"/>
</dbReference>
<dbReference type="GO" id="GO:0044183">
    <property type="term" value="F:protein folding chaperone"/>
    <property type="evidence" value="ECO:0007669"/>
    <property type="project" value="InterPro"/>
</dbReference>
<dbReference type="GO" id="GO:0051087">
    <property type="term" value="F:protein-folding chaperone binding"/>
    <property type="evidence" value="ECO:0007669"/>
    <property type="project" value="TreeGrafter"/>
</dbReference>
<dbReference type="GO" id="GO:0051082">
    <property type="term" value="F:unfolded protein binding"/>
    <property type="evidence" value="ECO:0007669"/>
    <property type="project" value="TreeGrafter"/>
</dbReference>
<dbReference type="GO" id="GO:0051085">
    <property type="term" value="P:chaperone cofactor-dependent protein refolding"/>
    <property type="evidence" value="ECO:0007669"/>
    <property type="project" value="TreeGrafter"/>
</dbReference>
<dbReference type="CDD" id="cd00320">
    <property type="entry name" value="cpn10"/>
    <property type="match status" value="1"/>
</dbReference>
<dbReference type="FunFam" id="2.30.33.40:FF:000007">
    <property type="entry name" value="10 kDa chaperonin"/>
    <property type="match status" value="1"/>
</dbReference>
<dbReference type="Gene3D" id="2.30.33.40">
    <property type="entry name" value="GroES chaperonin"/>
    <property type="match status" value="1"/>
</dbReference>
<dbReference type="HAMAP" id="MF_00580">
    <property type="entry name" value="CH10"/>
    <property type="match status" value="1"/>
</dbReference>
<dbReference type="InterPro" id="IPR020818">
    <property type="entry name" value="Chaperonin_GroES"/>
</dbReference>
<dbReference type="InterPro" id="IPR037124">
    <property type="entry name" value="Chaperonin_GroES_sf"/>
</dbReference>
<dbReference type="InterPro" id="IPR018369">
    <property type="entry name" value="Chaprnonin_Cpn10_CS"/>
</dbReference>
<dbReference type="InterPro" id="IPR011032">
    <property type="entry name" value="GroES-like_sf"/>
</dbReference>
<dbReference type="NCBIfam" id="NF001528">
    <property type="entry name" value="PRK00364.1-4"/>
    <property type="match status" value="1"/>
</dbReference>
<dbReference type="PANTHER" id="PTHR10772">
    <property type="entry name" value="10 KDA HEAT SHOCK PROTEIN"/>
    <property type="match status" value="1"/>
</dbReference>
<dbReference type="PANTHER" id="PTHR10772:SF58">
    <property type="entry name" value="CO-CHAPERONIN GROES"/>
    <property type="match status" value="1"/>
</dbReference>
<dbReference type="Pfam" id="PF00166">
    <property type="entry name" value="Cpn10"/>
    <property type="match status" value="1"/>
</dbReference>
<dbReference type="PRINTS" id="PR00297">
    <property type="entry name" value="CHAPERONIN10"/>
</dbReference>
<dbReference type="SMART" id="SM00883">
    <property type="entry name" value="Cpn10"/>
    <property type="match status" value="1"/>
</dbReference>
<dbReference type="SUPFAM" id="SSF50129">
    <property type="entry name" value="GroES-like"/>
    <property type="match status" value="1"/>
</dbReference>
<dbReference type="PROSITE" id="PS00681">
    <property type="entry name" value="CHAPERONINS_CPN10"/>
    <property type="match status" value="1"/>
</dbReference>
<name>CH10_STRAP</name>
<evidence type="ECO:0000255" key="1">
    <source>
        <dbReference type="HAMAP-Rule" id="MF_00580"/>
    </source>
</evidence>
<proteinExistence type="inferred from homology"/>
<sequence length="93" mass="9668">MLKPLGDRVVLKVEEKEQKVGGFVIAGAGQDATKTAKVVAAGDGIRTLNGELVAPSVKAGDTVLVESHAGIEVKDGEEKYLVVNEANILAIVE</sequence>